<dbReference type="EMBL" id="CP000438">
    <property type="protein sequence ID" value="ABJ13690.1"/>
    <property type="molecule type" value="Genomic_DNA"/>
</dbReference>
<dbReference type="RefSeq" id="WP_003103101.1">
    <property type="nucleotide sequence ID" value="NZ_CP034244.1"/>
</dbReference>
<dbReference type="SMR" id="Q02H19"/>
<dbReference type="GeneID" id="77222921"/>
<dbReference type="KEGG" id="pau:PA14_57460"/>
<dbReference type="PseudoCAP" id="PA14_57460"/>
<dbReference type="HOGENOM" id="CLU_107907_2_0_6"/>
<dbReference type="BioCyc" id="PAER208963:G1G74-4838-MONOMER"/>
<dbReference type="Proteomes" id="UP000000653">
    <property type="component" value="Chromosome"/>
</dbReference>
<dbReference type="GO" id="GO:0005737">
    <property type="term" value="C:cytoplasm"/>
    <property type="evidence" value="ECO:0007669"/>
    <property type="project" value="UniProtKB-UniRule"/>
</dbReference>
<dbReference type="GO" id="GO:0009295">
    <property type="term" value="C:nucleoid"/>
    <property type="evidence" value="ECO:0007669"/>
    <property type="project" value="UniProtKB-SubCell"/>
</dbReference>
<dbReference type="GO" id="GO:0003700">
    <property type="term" value="F:DNA-binding transcription factor activity"/>
    <property type="evidence" value="ECO:0007669"/>
    <property type="project" value="UniProtKB-UniRule"/>
</dbReference>
<dbReference type="GO" id="GO:0000976">
    <property type="term" value="F:transcription cis-regulatory region binding"/>
    <property type="evidence" value="ECO:0007669"/>
    <property type="project" value="TreeGrafter"/>
</dbReference>
<dbReference type="GO" id="GO:2000143">
    <property type="term" value="P:negative regulation of DNA-templated transcription initiation"/>
    <property type="evidence" value="ECO:0007669"/>
    <property type="project" value="TreeGrafter"/>
</dbReference>
<dbReference type="CDD" id="cd16321">
    <property type="entry name" value="MraZ_C"/>
    <property type="match status" value="1"/>
</dbReference>
<dbReference type="CDD" id="cd16320">
    <property type="entry name" value="MraZ_N"/>
    <property type="match status" value="1"/>
</dbReference>
<dbReference type="FunFam" id="3.40.1550.20:FF:000001">
    <property type="entry name" value="Transcriptional regulator MraZ"/>
    <property type="match status" value="1"/>
</dbReference>
<dbReference type="Gene3D" id="3.40.1550.20">
    <property type="entry name" value="Transcriptional regulator MraZ domain"/>
    <property type="match status" value="1"/>
</dbReference>
<dbReference type="HAMAP" id="MF_01008">
    <property type="entry name" value="MraZ"/>
    <property type="match status" value="1"/>
</dbReference>
<dbReference type="InterPro" id="IPR003444">
    <property type="entry name" value="MraZ"/>
</dbReference>
<dbReference type="InterPro" id="IPR035644">
    <property type="entry name" value="MraZ_C"/>
</dbReference>
<dbReference type="InterPro" id="IPR020603">
    <property type="entry name" value="MraZ_dom"/>
</dbReference>
<dbReference type="InterPro" id="IPR035642">
    <property type="entry name" value="MraZ_N"/>
</dbReference>
<dbReference type="InterPro" id="IPR038619">
    <property type="entry name" value="MraZ_sf"/>
</dbReference>
<dbReference type="InterPro" id="IPR007159">
    <property type="entry name" value="SpoVT-AbrB_dom"/>
</dbReference>
<dbReference type="InterPro" id="IPR037914">
    <property type="entry name" value="SpoVT-AbrB_sf"/>
</dbReference>
<dbReference type="NCBIfam" id="TIGR00242">
    <property type="entry name" value="division/cell wall cluster transcriptional repressor MraZ"/>
    <property type="match status" value="1"/>
</dbReference>
<dbReference type="PANTHER" id="PTHR34701">
    <property type="entry name" value="TRANSCRIPTIONAL REGULATOR MRAZ"/>
    <property type="match status" value="1"/>
</dbReference>
<dbReference type="PANTHER" id="PTHR34701:SF1">
    <property type="entry name" value="TRANSCRIPTIONAL REGULATOR MRAZ"/>
    <property type="match status" value="1"/>
</dbReference>
<dbReference type="Pfam" id="PF02381">
    <property type="entry name" value="MraZ"/>
    <property type="match status" value="2"/>
</dbReference>
<dbReference type="SUPFAM" id="SSF89447">
    <property type="entry name" value="AbrB/MazE/MraZ-like"/>
    <property type="match status" value="1"/>
</dbReference>
<dbReference type="PROSITE" id="PS51740">
    <property type="entry name" value="SPOVT_ABRB"/>
    <property type="match status" value="2"/>
</dbReference>
<evidence type="ECO:0000255" key="1">
    <source>
        <dbReference type="HAMAP-Rule" id="MF_01008"/>
    </source>
</evidence>
<evidence type="ECO:0000255" key="2">
    <source>
        <dbReference type="PROSITE-ProRule" id="PRU01076"/>
    </source>
</evidence>
<organism>
    <name type="scientific">Pseudomonas aeruginosa (strain UCBPP-PA14)</name>
    <dbReference type="NCBI Taxonomy" id="208963"/>
    <lineage>
        <taxon>Bacteria</taxon>
        <taxon>Pseudomonadati</taxon>
        <taxon>Pseudomonadota</taxon>
        <taxon>Gammaproteobacteria</taxon>
        <taxon>Pseudomonadales</taxon>
        <taxon>Pseudomonadaceae</taxon>
        <taxon>Pseudomonas</taxon>
    </lineage>
</organism>
<accession>Q02H19</accession>
<comment type="subunit">
    <text evidence="1">Forms oligomers.</text>
</comment>
<comment type="subcellular location">
    <subcellularLocation>
        <location evidence="1">Cytoplasm</location>
        <location evidence="1">Nucleoid</location>
    </subcellularLocation>
</comment>
<comment type="similarity">
    <text evidence="1">Belongs to the MraZ family.</text>
</comment>
<name>MRAZ_PSEAB</name>
<gene>
    <name evidence="1" type="primary">mraZ</name>
    <name type="ordered locus">PA14_57460</name>
</gene>
<feature type="chain" id="PRO_1000062912" description="Transcriptional regulator MraZ">
    <location>
        <begin position="1"/>
        <end position="151"/>
    </location>
</feature>
<feature type="domain" description="SpoVT-AbrB 1" evidence="2">
    <location>
        <begin position="5"/>
        <end position="52"/>
    </location>
</feature>
<feature type="domain" description="SpoVT-AbrB 2" evidence="2">
    <location>
        <begin position="81"/>
        <end position="124"/>
    </location>
</feature>
<reference key="1">
    <citation type="journal article" date="2006" name="Genome Biol.">
        <title>Genomic analysis reveals that Pseudomonas aeruginosa virulence is combinatorial.</title>
        <authorList>
            <person name="Lee D.G."/>
            <person name="Urbach J.M."/>
            <person name="Wu G."/>
            <person name="Liberati N.T."/>
            <person name="Feinbaum R.L."/>
            <person name="Miyata S."/>
            <person name="Diggins L.T."/>
            <person name="He J."/>
            <person name="Saucier M."/>
            <person name="Deziel E."/>
            <person name="Friedman L."/>
            <person name="Li L."/>
            <person name="Grills G."/>
            <person name="Montgomery K."/>
            <person name="Kucherlapati R."/>
            <person name="Rahme L.G."/>
            <person name="Ausubel F.M."/>
        </authorList>
    </citation>
    <scope>NUCLEOTIDE SEQUENCE [LARGE SCALE GENOMIC DNA]</scope>
    <source>
        <strain>UCBPP-PA14</strain>
    </source>
</reference>
<sequence length="151" mass="17111">MFRGANAISLDAKGRLAMPSRYRDELVSRCAGQLIVTIDAVDPCLTVYPLPEWELIEAKLRELPSLREETRRLQRLLIGNAVDLELDGNGRFLIPPRLREYAKLDKRAMLVGQLNKFQLWDEDAWNAMAEADLAAIKQPGGLPDELRDLIL</sequence>
<proteinExistence type="inferred from homology"/>
<protein>
    <recommendedName>
        <fullName>Transcriptional regulator MraZ</fullName>
    </recommendedName>
</protein>
<keyword id="KW-0963">Cytoplasm</keyword>
<keyword id="KW-0238">DNA-binding</keyword>
<keyword id="KW-0677">Repeat</keyword>
<keyword id="KW-0804">Transcription</keyword>
<keyword id="KW-0805">Transcription regulation</keyword>